<keyword id="KW-0997">Cell inner membrane</keyword>
<keyword id="KW-1003">Cell membrane</keyword>
<keyword id="KW-0472">Membrane</keyword>
<keyword id="KW-0520">NAD</keyword>
<keyword id="KW-0521">NADP</keyword>
<keyword id="KW-1185">Reference proteome</keyword>
<keyword id="KW-1278">Translocase</keyword>
<keyword id="KW-0812">Transmembrane</keyword>
<keyword id="KW-1133">Transmembrane helix</keyword>
<proteinExistence type="inferred from homology"/>
<name>PNTAB_RICPR</name>
<evidence type="ECO:0000250" key="1"/>
<evidence type="ECO:0000250" key="2">
    <source>
        <dbReference type="UniProtKB" id="Q2RSB2"/>
    </source>
</evidence>
<evidence type="ECO:0000255" key="3"/>
<organism>
    <name type="scientific">Rickettsia prowazekii (strain Madrid E)</name>
    <dbReference type="NCBI Taxonomy" id="272947"/>
    <lineage>
        <taxon>Bacteria</taxon>
        <taxon>Pseudomonadati</taxon>
        <taxon>Pseudomonadota</taxon>
        <taxon>Alphaproteobacteria</taxon>
        <taxon>Rickettsiales</taxon>
        <taxon>Rickettsiaceae</taxon>
        <taxon>Rickettsieae</taxon>
        <taxon>Rickettsia</taxon>
        <taxon>typhus group</taxon>
    </lineage>
</organism>
<dbReference type="EC" id="7.1.1.1" evidence="2"/>
<dbReference type="EMBL" id="U02878">
    <property type="status" value="NOT_ANNOTATED_CDS"/>
    <property type="molecule type" value="Unassigned_DNA"/>
</dbReference>
<dbReference type="EMBL" id="AJ235273">
    <property type="protein sequence ID" value="CAA15286.1"/>
    <property type="molecule type" value="Genomic_DNA"/>
</dbReference>
<dbReference type="PIR" id="F71648">
    <property type="entry name" value="F71648"/>
</dbReference>
<dbReference type="RefSeq" id="NP_221210.1">
    <property type="nucleotide sequence ID" value="NC_000963.1"/>
</dbReference>
<dbReference type="RefSeq" id="WP_004596754.1">
    <property type="nucleotide sequence ID" value="NC_000963.1"/>
</dbReference>
<dbReference type="SMR" id="P51995"/>
<dbReference type="STRING" id="272947.gene:17555931"/>
<dbReference type="EnsemblBacteria" id="CAA15286">
    <property type="protein sequence ID" value="CAA15286"/>
    <property type="gene ID" value="CAA15286"/>
</dbReference>
<dbReference type="KEGG" id="rpr:RP862"/>
<dbReference type="PATRIC" id="fig|272947.5.peg.901"/>
<dbReference type="eggNOG" id="COG3288">
    <property type="taxonomic scope" value="Bacteria"/>
</dbReference>
<dbReference type="HOGENOM" id="CLU_137885_0_0_5"/>
<dbReference type="OrthoDB" id="9810841at2"/>
<dbReference type="Proteomes" id="UP000002480">
    <property type="component" value="Chromosome"/>
</dbReference>
<dbReference type="GO" id="GO:0005886">
    <property type="term" value="C:plasma membrane"/>
    <property type="evidence" value="ECO:0007669"/>
    <property type="project" value="UniProtKB-SubCell"/>
</dbReference>
<dbReference type="GO" id="GO:0050661">
    <property type="term" value="F:NADP binding"/>
    <property type="evidence" value="ECO:0007669"/>
    <property type="project" value="TreeGrafter"/>
</dbReference>
<dbReference type="GO" id="GO:0008750">
    <property type="term" value="F:proton-translocating NAD(P)+ transhydrogenase activity"/>
    <property type="evidence" value="ECO:0007669"/>
    <property type="project" value="UniProtKB-EC"/>
</dbReference>
<dbReference type="GO" id="GO:0006740">
    <property type="term" value="P:NADPH regeneration"/>
    <property type="evidence" value="ECO:0007669"/>
    <property type="project" value="TreeGrafter"/>
</dbReference>
<dbReference type="InterPro" id="IPR024605">
    <property type="entry name" value="NADP_transhyd_a_C"/>
</dbReference>
<dbReference type="PANTHER" id="PTHR10160">
    <property type="entry name" value="NAD(P) TRANSHYDROGENASE"/>
    <property type="match status" value="1"/>
</dbReference>
<dbReference type="PANTHER" id="PTHR10160:SF19">
    <property type="entry name" value="PROTON-TRANSLOCATING NAD(P)(+) TRANSHYDROGENASE"/>
    <property type="match status" value="1"/>
</dbReference>
<dbReference type="Pfam" id="PF12769">
    <property type="entry name" value="PNTB_4TM"/>
    <property type="match status" value="1"/>
</dbReference>
<sequence length="132" mass="14325">MNQLPIMAKQAAEIASNAQELSNKLKDLVIDASWQTNTNTIDPLVFAITIFVLASFVGYYVVWKVTPALHTPLMSITNAISGIIVISSMIAITSSSAFEFSSLLGSFATLLASINIFGGFIVTTRMLEMFKK</sequence>
<accession>P51995</accession>
<comment type="function">
    <text evidence="1">The transhydrogenation between NADH and NADP is coupled to respiration and ATP hydrolysis and functions as a proton pump across the membrane.</text>
</comment>
<comment type="catalytic activity">
    <reaction evidence="2">
        <text>NAD(+) + NADPH + H(+)(in) = NADH + NADP(+) + H(+)(out)</text>
        <dbReference type="Rhea" id="RHEA:47992"/>
        <dbReference type="ChEBI" id="CHEBI:15378"/>
        <dbReference type="ChEBI" id="CHEBI:57540"/>
        <dbReference type="ChEBI" id="CHEBI:57783"/>
        <dbReference type="ChEBI" id="CHEBI:57945"/>
        <dbReference type="ChEBI" id="CHEBI:58349"/>
        <dbReference type="EC" id="7.1.1.1"/>
    </reaction>
</comment>
<comment type="subunit">
    <text>Complex of an alpha and a beta chain; in Rickettsia, the alpha chain seems to be made of two subunits.</text>
</comment>
<comment type="subcellular location">
    <subcellularLocation>
        <location evidence="1">Cell inner membrane</location>
        <topology evidence="1">Multi-pass membrane protein</topology>
    </subcellularLocation>
</comment>
<protein>
    <recommendedName>
        <fullName>NAD(P) transhydrogenase subunit alpha part 2</fullName>
        <ecNumber evidence="2">7.1.1.1</ecNumber>
    </recommendedName>
    <alternativeName>
        <fullName>Nicotinamide nucleotide transhydrogenase subunit alpha 2</fullName>
    </alternativeName>
    <alternativeName>
        <fullName>Pyridine nucleotide transhydrogenase subunit alpha 2</fullName>
    </alternativeName>
</protein>
<gene>
    <name type="primary">pntAB</name>
    <name type="ordered locus">RP862</name>
</gene>
<feature type="chain" id="PRO_0000199022" description="NAD(P) transhydrogenase subunit alpha part 2">
    <location>
        <begin position="1"/>
        <end position="132"/>
    </location>
</feature>
<feature type="transmembrane region" description="Helical" evidence="3">
    <location>
        <begin position="43"/>
        <end position="63"/>
    </location>
</feature>
<feature type="transmembrane region" description="Helical" evidence="3">
    <location>
        <begin position="72"/>
        <end position="92"/>
    </location>
</feature>
<feature type="transmembrane region" description="Helical" evidence="3">
    <location>
        <begin position="103"/>
        <end position="123"/>
    </location>
</feature>
<reference key="1">
    <citation type="submission" date="1993-10" db="EMBL/GenBank/DDBJ databases">
        <authorList>
            <person name="Wood D.O."/>
            <person name="Marks G.L."/>
            <person name="Winkler H.H."/>
        </authorList>
    </citation>
    <scope>NUCLEOTIDE SEQUENCE [GENOMIC DNA]</scope>
    <source>
        <strain>Madrid E</strain>
    </source>
</reference>
<reference key="2">
    <citation type="journal article" date="1998" name="Nature">
        <title>The genome sequence of Rickettsia prowazekii and the origin of mitochondria.</title>
        <authorList>
            <person name="Andersson S.G.E."/>
            <person name="Zomorodipour A."/>
            <person name="Andersson J.O."/>
            <person name="Sicheritz-Ponten T."/>
            <person name="Alsmark U.C.M."/>
            <person name="Podowski R.M."/>
            <person name="Naeslund A.K."/>
            <person name="Eriksson A.-S."/>
            <person name="Winkler H.H."/>
            <person name="Kurland C.G."/>
        </authorList>
    </citation>
    <scope>NUCLEOTIDE SEQUENCE [LARGE SCALE GENOMIC DNA]</scope>
    <source>
        <strain>Madrid E</strain>
    </source>
</reference>
<reference key="3">
    <citation type="journal article" date="1996" name="J. Mol. Evol.">
        <title>Codon usage and base composition in Rickettsia prowazekii.</title>
        <authorList>
            <person name="Andersson S.G.E."/>
            <person name="Sharp P.M."/>
        </authorList>
    </citation>
    <scope>IDENTIFICATION</scope>
    <scope>GENE NAME</scope>
</reference>